<evidence type="ECO:0000255" key="1">
    <source>
        <dbReference type="HAMAP-Rule" id="MF_01347"/>
    </source>
</evidence>
<protein>
    <recommendedName>
        <fullName evidence="1">ATP synthase subunit beta</fullName>
        <ecNumber evidence="1">7.1.2.2</ecNumber>
    </recommendedName>
    <alternativeName>
        <fullName evidence="1">ATP synthase F1 sector subunit beta</fullName>
    </alternativeName>
    <alternativeName>
        <fullName evidence="1">F-ATPase subunit beta</fullName>
    </alternativeName>
</protein>
<proteinExistence type="inferred from homology"/>
<sequence length="487" mass="51925">MVASAPASAGTKGVIRQVIGPVLDVEFPAGKLPKIYNALRIEGKNPAGDDVALTAEVQQLLGDHRVRAVAMSGTDGLVRGMEAVDTGAPISVPVGEGTLGRIFNVLGEPVDEQGPVNTTATAPIHRDAPNITELETKPKVFETGIKVIDLLAPYRQGGKVGLFGGAGVGKTVLIQELINNIAKEHGGVSVFGGVGERTREGNDLYEEFKESGVINADDLSKSKVALCYGQMNEPPGARMRVGLSALTMAEHFRDVNKQDVLLFVDNIFRFVQAGSEVSALLGRMPSAVGYQPTLGTDVGALQERVASTVEGSITSIQAVYVPADDLTDPAPATTFAHLDATTVLNRALASKGIYPAVDPLDSTSTMLQPAVVGDEHYRTARAVQSTLQRYKELQDIIAILGLDELSEDDRRTVDRARKVEKFLSQPFFVAEIFTGMPGKYVKLEETIAGFNQILAGELDSLPEAAFYLVGNIEEVKAKAEKIAAETK</sequence>
<organism>
    <name type="scientific">Synechococcus sp. (strain CC9605)</name>
    <dbReference type="NCBI Taxonomy" id="110662"/>
    <lineage>
        <taxon>Bacteria</taxon>
        <taxon>Bacillati</taxon>
        <taxon>Cyanobacteriota</taxon>
        <taxon>Cyanophyceae</taxon>
        <taxon>Synechococcales</taxon>
        <taxon>Synechococcaceae</taxon>
        <taxon>Synechococcus</taxon>
    </lineage>
</organism>
<accession>Q3AHM2</accession>
<gene>
    <name evidence="1" type="primary">atpD</name>
    <name evidence="1" type="synonym">atpB</name>
    <name type="ordered locus">Syncc9605_2171</name>
</gene>
<dbReference type="EC" id="7.1.2.2" evidence="1"/>
<dbReference type="EMBL" id="CP000110">
    <property type="protein sequence ID" value="ABB35910.1"/>
    <property type="molecule type" value="Genomic_DNA"/>
</dbReference>
<dbReference type="RefSeq" id="WP_011365114.1">
    <property type="nucleotide sequence ID" value="NC_007516.1"/>
</dbReference>
<dbReference type="SMR" id="Q3AHM2"/>
<dbReference type="STRING" id="110662.Syncc9605_2171"/>
<dbReference type="KEGG" id="syd:Syncc9605_2171"/>
<dbReference type="eggNOG" id="COG0055">
    <property type="taxonomic scope" value="Bacteria"/>
</dbReference>
<dbReference type="HOGENOM" id="CLU_022398_0_2_3"/>
<dbReference type="OrthoDB" id="9801639at2"/>
<dbReference type="GO" id="GO:0031676">
    <property type="term" value="C:plasma membrane-derived thylakoid membrane"/>
    <property type="evidence" value="ECO:0007669"/>
    <property type="project" value="UniProtKB-SubCell"/>
</dbReference>
<dbReference type="GO" id="GO:0045259">
    <property type="term" value="C:proton-transporting ATP synthase complex"/>
    <property type="evidence" value="ECO:0007669"/>
    <property type="project" value="UniProtKB-KW"/>
</dbReference>
<dbReference type="GO" id="GO:0005524">
    <property type="term" value="F:ATP binding"/>
    <property type="evidence" value="ECO:0007669"/>
    <property type="project" value="UniProtKB-UniRule"/>
</dbReference>
<dbReference type="GO" id="GO:0016887">
    <property type="term" value="F:ATP hydrolysis activity"/>
    <property type="evidence" value="ECO:0007669"/>
    <property type="project" value="InterPro"/>
</dbReference>
<dbReference type="GO" id="GO:0046933">
    <property type="term" value="F:proton-transporting ATP synthase activity, rotational mechanism"/>
    <property type="evidence" value="ECO:0007669"/>
    <property type="project" value="UniProtKB-UniRule"/>
</dbReference>
<dbReference type="CDD" id="cd18110">
    <property type="entry name" value="ATP-synt_F1_beta_C"/>
    <property type="match status" value="1"/>
</dbReference>
<dbReference type="CDD" id="cd18115">
    <property type="entry name" value="ATP-synt_F1_beta_N"/>
    <property type="match status" value="1"/>
</dbReference>
<dbReference type="CDD" id="cd01133">
    <property type="entry name" value="F1-ATPase_beta_CD"/>
    <property type="match status" value="1"/>
</dbReference>
<dbReference type="FunFam" id="1.10.1140.10:FF:000001">
    <property type="entry name" value="ATP synthase subunit beta"/>
    <property type="match status" value="1"/>
</dbReference>
<dbReference type="FunFam" id="3.40.50.300:FF:000004">
    <property type="entry name" value="ATP synthase subunit beta"/>
    <property type="match status" value="1"/>
</dbReference>
<dbReference type="FunFam" id="2.40.10.170:FF:000002">
    <property type="entry name" value="ATP synthase subunit beta, chloroplastic"/>
    <property type="match status" value="1"/>
</dbReference>
<dbReference type="Gene3D" id="2.40.10.170">
    <property type="match status" value="1"/>
</dbReference>
<dbReference type="Gene3D" id="1.10.1140.10">
    <property type="entry name" value="Bovine Mitochondrial F1-atpase, Atp Synthase Beta Chain, Chain D, domain 3"/>
    <property type="match status" value="1"/>
</dbReference>
<dbReference type="Gene3D" id="3.40.50.300">
    <property type="entry name" value="P-loop containing nucleotide triphosphate hydrolases"/>
    <property type="match status" value="1"/>
</dbReference>
<dbReference type="HAMAP" id="MF_01347">
    <property type="entry name" value="ATP_synth_beta_bact"/>
    <property type="match status" value="1"/>
</dbReference>
<dbReference type="InterPro" id="IPR003593">
    <property type="entry name" value="AAA+_ATPase"/>
</dbReference>
<dbReference type="InterPro" id="IPR055190">
    <property type="entry name" value="ATP-synt_VA_C"/>
</dbReference>
<dbReference type="InterPro" id="IPR005722">
    <property type="entry name" value="ATP_synth_F1_bsu"/>
</dbReference>
<dbReference type="InterPro" id="IPR020003">
    <property type="entry name" value="ATPase_a/bsu_AS"/>
</dbReference>
<dbReference type="InterPro" id="IPR050053">
    <property type="entry name" value="ATPase_alpha/beta_chains"/>
</dbReference>
<dbReference type="InterPro" id="IPR004100">
    <property type="entry name" value="ATPase_F1/V1/A1_a/bsu_N"/>
</dbReference>
<dbReference type="InterPro" id="IPR036121">
    <property type="entry name" value="ATPase_F1/V1/A1_a/bsu_N_sf"/>
</dbReference>
<dbReference type="InterPro" id="IPR000194">
    <property type="entry name" value="ATPase_F1/V1/A1_a/bsu_nucl-bd"/>
</dbReference>
<dbReference type="InterPro" id="IPR024034">
    <property type="entry name" value="ATPase_F1/V1_b/a_C"/>
</dbReference>
<dbReference type="InterPro" id="IPR027417">
    <property type="entry name" value="P-loop_NTPase"/>
</dbReference>
<dbReference type="NCBIfam" id="TIGR01039">
    <property type="entry name" value="atpD"/>
    <property type="match status" value="1"/>
</dbReference>
<dbReference type="PANTHER" id="PTHR15184">
    <property type="entry name" value="ATP SYNTHASE"/>
    <property type="match status" value="1"/>
</dbReference>
<dbReference type="PANTHER" id="PTHR15184:SF71">
    <property type="entry name" value="ATP SYNTHASE SUBUNIT BETA, MITOCHONDRIAL"/>
    <property type="match status" value="1"/>
</dbReference>
<dbReference type="Pfam" id="PF00006">
    <property type="entry name" value="ATP-synt_ab"/>
    <property type="match status" value="1"/>
</dbReference>
<dbReference type="Pfam" id="PF02874">
    <property type="entry name" value="ATP-synt_ab_N"/>
    <property type="match status" value="1"/>
</dbReference>
<dbReference type="Pfam" id="PF22919">
    <property type="entry name" value="ATP-synt_VA_C"/>
    <property type="match status" value="1"/>
</dbReference>
<dbReference type="SMART" id="SM00382">
    <property type="entry name" value="AAA"/>
    <property type="match status" value="1"/>
</dbReference>
<dbReference type="SUPFAM" id="SSF47917">
    <property type="entry name" value="C-terminal domain of alpha and beta subunits of F1 ATP synthase"/>
    <property type="match status" value="1"/>
</dbReference>
<dbReference type="SUPFAM" id="SSF50615">
    <property type="entry name" value="N-terminal domain of alpha and beta subunits of F1 ATP synthase"/>
    <property type="match status" value="1"/>
</dbReference>
<dbReference type="SUPFAM" id="SSF52540">
    <property type="entry name" value="P-loop containing nucleoside triphosphate hydrolases"/>
    <property type="match status" value="1"/>
</dbReference>
<dbReference type="PROSITE" id="PS00152">
    <property type="entry name" value="ATPASE_ALPHA_BETA"/>
    <property type="match status" value="1"/>
</dbReference>
<name>ATPB_SYNSC</name>
<reference key="1">
    <citation type="submission" date="2005-07" db="EMBL/GenBank/DDBJ databases">
        <title>Complete sequence of Synechococcus sp. CC9605.</title>
        <authorList>
            <consortium name="US DOE Joint Genome Institute"/>
            <person name="Copeland A."/>
            <person name="Lucas S."/>
            <person name="Lapidus A."/>
            <person name="Barry K."/>
            <person name="Detter J.C."/>
            <person name="Glavina T."/>
            <person name="Hammon N."/>
            <person name="Israni S."/>
            <person name="Pitluck S."/>
            <person name="Schmutz J."/>
            <person name="Martinez M."/>
            <person name="Larimer F."/>
            <person name="Land M."/>
            <person name="Kyrpides N."/>
            <person name="Ivanova N."/>
            <person name="Richardson P."/>
        </authorList>
    </citation>
    <scope>NUCLEOTIDE SEQUENCE [LARGE SCALE GENOMIC DNA]</scope>
    <source>
        <strain>CC9605</strain>
    </source>
</reference>
<feature type="chain" id="PRO_0000254405" description="ATP synthase subunit beta">
    <location>
        <begin position="1"/>
        <end position="487"/>
    </location>
</feature>
<feature type="binding site" evidence="1">
    <location>
        <begin position="164"/>
        <end position="171"/>
    </location>
    <ligand>
        <name>ATP</name>
        <dbReference type="ChEBI" id="CHEBI:30616"/>
    </ligand>
</feature>
<comment type="function">
    <text evidence="1">Produces ATP from ADP in the presence of a proton gradient across the membrane. The catalytic sites are hosted primarily by the beta subunits.</text>
</comment>
<comment type="catalytic activity">
    <reaction evidence="1">
        <text>ATP + H2O + 4 H(+)(in) = ADP + phosphate + 5 H(+)(out)</text>
        <dbReference type="Rhea" id="RHEA:57720"/>
        <dbReference type="ChEBI" id="CHEBI:15377"/>
        <dbReference type="ChEBI" id="CHEBI:15378"/>
        <dbReference type="ChEBI" id="CHEBI:30616"/>
        <dbReference type="ChEBI" id="CHEBI:43474"/>
        <dbReference type="ChEBI" id="CHEBI:456216"/>
        <dbReference type="EC" id="7.1.2.2"/>
    </reaction>
</comment>
<comment type="subunit">
    <text evidence="1">F-type ATPases have 2 components, CF(1) - the catalytic core - and CF(0) - the membrane proton channel. CF(1) has five subunits: alpha(3), beta(3), gamma(1), delta(1), epsilon(1). CF(0) has four main subunits: a(1), b(1), b'(1) and c(9-12).</text>
</comment>
<comment type="subcellular location">
    <subcellularLocation>
        <location evidence="1">Cellular thylakoid membrane</location>
        <topology evidence="1">Peripheral membrane protein</topology>
    </subcellularLocation>
</comment>
<comment type="similarity">
    <text evidence="1">Belongs to the ATPase alpha/beta chains family.</text>
</comment>
<keyword id="KW-0066">ATP synthesis</keyword>
<keyword id="KW-0067">ATP-binding</keyword>
<keyword id="KW-0139">CF(1)</keyword>
<keyword id="KW-0375">Hydrogen ion transport</keyword>
<keyword id="KW-0406">Ion transport</keyword>
<keyword id="KW-0472">Membrane</keyword>
<keyword id="KW-0547">Nucleotide-binding</keyword>
<keyword id="KW-0793">Thylakoid</keyword>
<keyword id="KW-1278">Translocase</keyword>
<keyword id="KW-0813">Transport</keyword>